<protein>
    <recommendedName>
        <fullName evidence="1">GMP synthase [glutamine-hydrolyzing]</fullName>
        <ecNumber evidence="1">6.3.5.2</ecNumber>
    </recommendedName>
    <alternativeName>
        <fullName evidence="1">GMP synthetase</fullName>
    </alternativeName>
    <alternativeName>
        <fullName evidence="1">Glutamine amidotransferase</fullName>
    </alternativeName>
</protein>
<accession>A1JKT2</accession>
<keyword id="KW-0067">ATP-binding</keyword>
<keyword id="KW-0315">Glutamine amidotransferase</keyword>
<keyword id="KW-0332">GMP biosynthesis</keyword>
<keyword id="KW-0436">Ligase</keyword>
<keyword id="KW-0547">Nucleotide-binding</keyword>
<keyword id="KW-0658">Purine biosynthesis</keyword>
<feature type="chain" id="PRO_1000120456" description="GMP synthase [glutamine-hydrolyzing]">
    <location>
        <begin position="1"/>
        <end position="525"/>
    </location>
</feature>
<feature type="domain" description="Glutamine amidotransferase type-1" evidence="1">
    <location>
        <begin position="9"/>
        <end position="207"/>
    </location>
</feature>
<feature type="domain" description="GMPS ATP-PPase" evidence="1">
    <location>
        <begin position="208"/>
        <end position="400"/>
    </location>
</feature>
<feature type="active site" description="Nucleophile" evidence="1">
    <location>
        <position position="86"/>
    </location>
</feature>
<feature type="active site" evidence="1">
    <location>
        <position position="181"/>
    </location>
</feature>
<feature type="active site" evidence="1">
    <location>
        <position position="183"/>
    </location>
</feature>
<feature type="binding site" evidence="1">
    <location>
        <begin position="235"/>
        <end position="241"/>
    </location>
    <ligand>
        <name>ATP</name>
        <dbReference type="ChEBI" id="CHEBI:30616"/>
    </ligand>
</feature>
<sequence>MTKNIHKHRILILDFGSQYTQLVARRVREIGVYCELWAWDVTEDQIREFNPSGIILSGGPESTTEHDSPRAPDYVFTAGVPVLGVCYGMQTMAMQLGGKVEGSNQREFGYAQVEIKTDSALIRDIKDAINPAGEAVLDVWMSHGDKVTAIPSDFVTVASTDTCPFAIMANEEKRFYGVQFHPEVTHTKQGQRLLERFVLDICACEALWTPATIIEDAIVRLREQIGEDHVILGLSGGVDSSVTAMLLHRAIGKRLTCVFVDNGLLRLNEADQVLEMFGDKFGLNIVHVAAEDRFLAALAGVDEPEAKRKIIGRVFVELFDEEACKQEQVKWLAQGTIYPDVIESAASATGKAHVIKSHHNVGGLPKEMKLGLVEPLKELFKDEVRKIGLELGLPYDMLYRHPFPGPGLGVRVLGEVKKEYCDLLRRADAIFIEELHKADLYNKVSQAFTVFLPVRSVGVMGDGRKYDWVVSLRAVETIDFMTAHWAHLPYDFLGRVSNRIINEVNGISRVVYDISGKPPATIEWE</sequence>
<reference key="1">
    <citation type="journal article" date="2006" name="PLoS Genet.">
        <title>The complete genome sequence and comparative genome analysis of the high pathogenicity Yersinia enterocolitica strain 8081.</title>
        <authorList>
            <person name="Thomson N.R."/>
            <person name="Howard S."/>
            <person name="Wren B.W."/>
            <person name="Holden M.T.G."/>
            <person name="Crossman L."/>
            <person name="Challis G.L."/>
            <person name="Churcher C."/>
            <person name="Mungall K."/>
            <person name="Brooks K."/>
            <person name="Chillingworth T."/>
            <person name="Feltwell T."/>
            <person name="Abdellah Z."/>
            <person name="Hauser H."/>
            <person name="Jagels K."/>
            <person name="Maddison M."/>
            <person name="Moule S."/>
            <person name="Sanders M."/>
            <person name="Whitehead S."/>
            <person name="Quail M.A."/>
            <person name="Dougan G."/>
            <person name="Parkhill J."/>
            <person name="Prentice M.B."/>
        </authorList>
    </citation>
    <scope>NUCLEOTIDE SEQUENCE [LARGE SCALE GENOMIC DNA]</scope>
    <source>
        <strain>NCTC 13174 / 8081</strain>
    </source>
</reference>
<proteinExistence type="inferred from homology"/>
<organism>
    <name type="scientific">Yersinia enterocolitica serotype O:8 / biotype 1B (strain NCTC 13174 / 8081)</name>
    <dbReference type="NCBI Taxonomy" id="393305"/>
    <lineage>
        <taxon>Bacteria</taxon>
        <taxon>Pseudomonadati</taxon>
        <taxon>Pseudomonadota</taxon>
        <taxon>Gammaproteobacteria</taxon>
        <taxon>Enterobacterales</taxon>
        <taxon>Yersiniaceae</taxon>
        <taxon>Yersinia</taxon>
    </lineage>
</organism>
<evidence type="ECO:0000255" key="1">
    <source>
        <dbReference type="HAMAP-Rule" id="MF_00344"/>
    </source>
</evidence>
<dbReference type="EC" id="6.3.5.2" evidence="1"/>
<dbReference type="EMBL" id="AM286415">
    <property type="protein sequence ID" value="CAL11179.1"/>
    <property type="molecule type" value="Genomic_DNA"/>
</dbReference>
<dbReference type="RefSeq" id="WP_011815789.1">
    <property type="nucleotide sequence ID" value="NC_008800.1"/>
</dbReference>
<dbReference type="RefSeq" id="YP_001005414.1">
    <property type="nucleotide sequence ID" value="NC_008800.1"/>
</dbReference>
<dbReference type="SMR" id="A1JKT2"/>
<dbReference type="MEROPS" id="C26.957"/>
<dbReference type="KEGG" id="yen:YE1082"/>
<dbReference type="PATRIC" id="fig|393305.7.peg.1180"/>
<dbReference type="eggNOG" id="COG0518">
    <property type="taxonomic scope" value="Bacteria"/>
</dbReference>
<dbReference type="eggNOG" id="COG0519">
    <property type="taxonomic scope" value="Bacteria"/>
</dbReference>
<dbReference type="HOGENOM" id="CLU_014340_0_5_6"/>
<dbReference type="OrthoDB" id="9802219at2"/>
<dbReference type="UniPathway" id="UPA00189">
    <property type="reaction ID" value="UER00296"/>
</dbReference>
<dbReference type="Proteomes" id="UP000000642">
    <property type="component" value="Chromosome"/>
</dbReference>
<dbReference type="GO" id="GO:0005829">
    <property type="term" value="C:cytosol"/>
    <property type="evidence" value="ECO:0007669"/>
    <property type="project" value="TreeGrafter"/>
</dbReference>
<dbReference type="GO" id="GO:0005524">
    <property type="term" value="F:ATP binding"/>
    <property type="evidence" value="ECO:0007669"/>
    <property type="project" value="UniProtKB-UniRule"/>
</dbReference>
<dbReference type="GO" id="GO:0003921">
    <property type="term" value="F:GMP synthase activity"/>
    <property type="evidence" value="ECO:0007669"/>
    <property type="project" value="InterPro"/>
</dbReference>
<dbReference type="CDD" id="cd01742">
    <property type="entry name" value="GATase1_GMP_Synthase"/>
    <property type="match status" value="1"/>
</dbReference>
<dbReference type="CDD" id="cd01997">
    <property type="entry name" value="GMP_synthase_C"/>
    <property type="match status" value="1"/>
</dbReference>
<dbReference type="FunFam" id="3.30.300.10:FF:000002">
    <property type="entry name" value="GMP synthase [glutamine-hydrolyzing]"/>
    <property type="match status" value="1"/>
</dbReference>
<dbReference type="FunFam" id="3.40.50.620:FF:000001">
    <property type="entry name" value="GMP synthase [glutamine-hydrolyzing]"/>
    <property type="match status" value="1"/>
</dbReference>
<dbReference type="FunFam" id="3.40.50.880:FF:000001">
    <property type="entry name" value="GMP synthase [glutamine-hydrolyzing]"/>
    <property type="match status" value="1"/>
</dbReference>
<dbReference type="Gene3D" id="3.30.300.10">
    <property type="match status" value="1"/>
</dbReference>
<dbReference type="Gene3D" id="3.40.50.880">
    <property type="match status" value="1"/>
</dbReference>
<dbReference type="Gene3D" id="3.40.50.620">
    <property type="entry name" value="HUPs"/>
    <property type="match status" value="1"/>
</dbReference>
<dbReference type="HAMAP" id="MF_00344">
    <property type="entry name" value="GMP_synthase"/>
    <property type="match status" value="1"/>
</dbReference>
<dbReference type="InterPro" id="IPR029062">
    <property type="entry name" value="Class_I_gatase-like"/>
</dbReference>
<dbReference type="InterPro" id="IPR017926">
    <property type="entry name" value="GATASE"/>
</dbReference>
<dbReference type="InterPro" id="IPR001674">
    <property type="entry name" value="GMP_synth_C"/>
</dbReference>
<dbReference type="InterPro" id="IPR004739">
    <property type="entry name" value="GMP_synth_GATase"/>
</dbReference>
<dbReference type="InterPro" id="IPR022955">
    <property type="entry name" value="GMP_synthase"/>
</dbReference>
<dbReference type="InterPro" id="IPR025777">
    <property type="entry name" value="GMPS_ATP_PPase_dom"/>
</dbReference>
<dbReference type="InterPro" id="IPR022310">
    <property type="entry name" value="NAD/GMP_synthase"/>
</dbReference>
<dbReference type="InterPro" id="IPR014729">
    <property type="entry name" value="Rossmann-like_a/b/a_fold"/>
</dbReference>
<dbReference type="NCBIfam" id="TIGR00884">
    <property type="entry name" value="guaA_Cterm"/>
    <property type="match status" value="1"/>
</dbReference>
<dbReference type="NCBIfam" id="TIGR00888">
    <property type="entry name" value="guaA_Nterm"/>
    <property type="match status" value="1"/>
</dbReference>
<dbReference type="NCBIfam" id="NF000848">
    <property type="entry name" value="PRK00074.1"/>
    <property type="match status" value="1"/>
</dbReference>
<dbReference type="PANTHER" id="PTHR11922:SF2">
    <property type="entry name" value="GMP SYNTHASE [GLUTAMINE-HYDROLYZING]"/>
    <property type="match status" value="1"/>
</dbReference>
<dbReference type="PANTHER" id="PTHR11922">
    <property type="entry name" value="GMP SYNTHASE-RELATED"/>
    <property type="match status" value="1"/>
</dbReference>
<dbReference type="Pfam" id="PF00117">
    <property type="entry name" value="GATase"/>
    <property type="match status" value="1"/>
</dbReference>
<dbReference type="Pfam" id="PF00958">
    <property type="entry name" value="GMP_synt_C"/>
    <property type="match status" value="1"/>
</dbReference>
<dbReference type="Pfam" id="PF02540">
    <property type="entry name" value="NAD_synthase"/>
    <property type="match status" value="1"/>
</dbReference>
<dbReference type="PRINTS" id="PR00097">
    <property type="entry name" value="ANTSNTHASEII"/>
</dbReference>
<dbReference type="PRINTS" id="PR00099">
    <property type="entry name" value="CPSGATASE"/>
</dbReference>
<dbReference type="PRINTS" id="PR00096">
    <property type="entry name" value="GATASE"/>
</dbReference>
<dbReference type="SUPFAM" id="SSF52402">
    <property type="entry name" value="Adenine nucleotide alpha hydrolases-like"/>
    <property type="match status" value="1"/>
</dbReference>
<dbReference type="SUPFAM" id="SSF52317">
    <property type="entry name" value="Class I glutamine amidotransferase-like"/>
    <property type="match status" value="1"/>
</dbReference>
<dbReference type="SUPFAM" id="SSF54810">
    <property type="entry name" value="GMP synthetase C-terminal dimerisation domain"/>
    <property type="match status" value="1"/>
</dbReference>
<dbReference type="PROSITE" id="PS51273">
    <property type="entry name" value="GATASE_TYPE_1"/>
    <property type="match status" value="1"/>
</dbReference>
<dbReference type="PROSITE" id="PS51553">
    <property type="entry name" value="GMPS_ATP_PPASE"/>
    <property type="match status" value="1"/>
</dbReference>
<gene>
    <name evidence="1" type="primary">guaA</name>
    <name type="ordered locus">YE1082</name>
</gene>
<comment type="function">
    <text evidence="1">Catalyzes the synthesis of GMP from XMP.</text>
</comment>
<comment type="catalytic activity">
    <reaction evidence="1">
        <text>XMP + L-glutamine + ATP + H2O = GMP + L-glutamate + AMP + diphosphate + 2 H(+)</text>
        <dbReference type="Rhea" id="RHEA:11680"/>
        <dbReference type="ChEBI" id="CHEBI:15377"/>
        <dbReference type="ChEBI" id="CHEBI:15378"/>
        <dbReference type="ChEBI" id="CHEBI:29985"/>
        <dbReference type="ChEBI" id="CHEBI:30616"/>
        <dbReference type="ChEBI" id="CHEBI:33019"/>
        <dbReference type="ChEBI" id="CHEBI:57464"/>
        <dbReference type="ChEBI" id="CHEBI:58115"/>
        <dbReference type="ChEBI" id="CHEBI:58359"/>
        <dbReference type="ChEBI" id="CHEBI:456215"/>
        <dbReference type="EC" id="6.3.5.2"/>
    </reaction>
</comment>
<comment type="pathway">
    <text evidence="1">Purine metabolism; GMP biosynthesis; GMP from XMP (L-Gln route): step 1/1.</text>
</comment>
<comment type="subunit">
    <text evidence="1">Homodimer.</text>
</comment>
<name>GUAA_YERE8</name>